<feature type="chain" id="PRO_0000173016" description="Dephospho-CoA kinase">
    <location>
        <begin position="1"/>
        <end position="197"/>
    </location>
</feature>
<feature type="domain" description="DPCK" evidence="1">
    <location>
        <begin position="2"/>
        <end position="197"/>
    </location>
</feature>
<feature type="binding site" evidence="1">
    <location>
        <begin position="10"/>
        <end position="15"/>
    </location>
    <ligand>
        <name>ATP</name>
        <dbReference type="ChEBI" id="CHEBI:30616"/>
    </ligand>
</feature>
<keyword id="KW-0067">ATP-binding</keyword>
<keyword id="KW-0173">Coenzyme A biosynthesis</keyword>
<keyword id="KW-0963">Cytoplasm</keyword>
<keyword id="KW-0418">Kinase</keyword>
<keyword id="KW-0547">Nucleotide-binding</keyword>
<keyword id="KW-0808">Transferase</keyword>
<gene>
    <name evidence="1" type="primary">coaE</name>
    <name type="ordered locus">M6_Spy0435</name>
</gene>
<proteinExistence type="inferred from homology"/>
<accession>Q5XDE3</accession>
<dbReference type="EC" id="2.7.1.24" evidence="1"/>
<dbReference type="EMBL" id="CP000003">
    <property type="protein sequence ID" value="AAT86570.1"/>
    <property type="status" value="ALT_INIT"/>
    <property type="molecule type" value="Genomic_DNA"/>
</dbReference>
<dbReference type="RefSeq" id="WP_011017469.1">
    <property type="nucleotide sequence ID" value="NC_006086.1"/>
</dbReference>
<dbReference type="SMR" id="Q5XDE3"/>
<dbReference type="KEGG" id="spa:M6_Spy0435"/>
<dbReference type="HOGENOM" id="CLU_057180_0_0_9"/>
<dbReference type="UniPathway" id="UPA00241">
    <property type="reaction ID" value="UER00356"/>
</dbReference>
<dbReference type="Proteomes" id="UP000001167">
    <property type="component" value="Chromosome"/>
</dbReference>
<dbReference type="GO" id="GO:0005737">
    <property type="term" value="C:cytoplasm"/>
    <property type="evidence" value="ECO:0007669"/>
    <property type="project" value="UniProtKB-SubCell"/>
</dbReference>
<dbReference type="GO" id="GO:0005524">
    <property type="term" value="F:ATP binding"/>
    <property type="evidence" value="ECO:0007669"/>
    <property type="project" value="UniProtKB-UniRule"/>
</dbReference>
<dbReference type="GO" id="GO:0004140">
    <property type="term" value="F:dephospho-CoA kinase activity"/>
    <property type="evidence" value="ECO:0007669"/>
    <property type="project" value="UniProtKB-UniRule"/>
</dbReference>
<dbReference type="GO" id="GO:0015937">
    <property type="term" value="P:coenzyme A biosynthetic process"/>
    <property type="evidence" value="ECO:0007669"/>
    <property type="project" value="UniProtKB-UniRule"/>
</dbReference>
<dbReference type="CDD" id="cd02022">
    <property type="entry name" value="DPCK"/>
    <property type="match status" value="1"/>
</dbReference>
<dbReference type="FunFam" id="3.40.50.300:FF:000991">
    <property type="entry name" value="Dephospho-CoA kinase"/>
    <property type="match status" value="1"/>
</dbReference>
<dbReference type="Gene3D" id="3.40.50.300">
    <property type="entry name" value="P-loop containing nucleotide triphosphate hydrolases"/>
    <property type="match status" value="1"/>
</dbReference>
<dbReference type="HAMAP" id="MF_00376">
    <property type="entry name" value="Dephospho_CoA_kinase"/>
    <property type="match status" value="1"/>
</dbReference>
<dbReference type="InterPro" id="IPR001977">
    <property type="entry name" value="Depp_CoAkinase"/>
</dbReference>
<dbReference type="InterPro" id="IPR027417">
    <property type="entry name" value="P-loop_NTPase"/>
</dbReference>
<dbReference type="NCBIfam" id="TIGR00152">
    <property type="entry name" value="dephospho-CoA kinase"/>
    <property type="match status" value="1"/>
</dbReference>
<dbReference type="PANTHER" id="PTHR10695:SF46">
    <property type="entry name" value="BIFUNCTIONAL COENZYME A SYNTHASE-RELATED"/>
    <property type="match status" value="1"/>
</dbReference>
<dbReference type="PANTHER" id="PTHR10695">
    <property type="entry name" value="DEPHOSPHO-COA KINASE-RELATED"/>
    <property type="match status" value="1"/>
</dbReference>
<dbReference type="Pfam" id="PF01121">
    <property type="entry name" value="CoaE"/>
    <property type="match status" value="1"/>
</dbReference>
<dbReference type="SUPFAM" id="SSF52540">
    <property type="entry name" value="P-loop containing nucleoside triphosphate hydrolases"/>
    <property type="match status" value="1"/>
</dbReference>
<dbReference type="PROSITE" id="PS51219">
    <property type="entry name" value="DPCK"/>
    <property type="match status" value="1"/>
</dbReference>
<sequence>MIIGITGGIASGKSTVVKVIRKAGYQVIDADQVVHDLQEKGGRLYEALREAFGNQILKADGELDRTKLSEMLFSNPDNMATSSAIQNQIIKEELAAKRDHLAQSQAIFFMDIPLLMELGYQDWFDAIWLVYVDAQTQLQRLMARNRLDKGKARQRIASQLPIEEKKPYASLVIDNNGDMETLIKQVQSALLSLANPR</sequence>
<evidence type="ECO:0000255" key="1">
    <source>
        <dbReference type="HAMAP-Rule" id="MF_00376"/>
    </source>
</evidence>
<evidence type="ECO:0000305" key="2"/>
<comment type="function">
    <text evidence="1">Catalyzes the phosphorylation of the 3'-hydroxyl group of dephosphocoenzyme A to form coenzyme A.</text>
</comment>
<comment type="catalytic activity">
    <reaction evidence="1">
        <text>3'-dephospho-CoA + ATP = ADP + CoA + H(+)</text>
        <dbReference type="Rhea" id="RHEA:18245"/>
        <dbReference type="ChEBI" id="CHEBI:15378"/>
        <dbReference type="ChEBI" id="CHEBI:30616"/>
        <dbReference type="ChEBI" id="CHEBI:57287"/>
        <dbReference type="ChEBI" id="CHEBI:57328"/>
        <dbReference type="ChEBI" id="CHEBI:456216"/>
        <dbReference type="EC" id="2.7.1.24"/>
    </reaction>
</comment>
<comment type="pathway">
    <text evidence="1">Cofactor biosynthesis; coenzyme A biosynthesis; CoA from (R)-pantothenate: step 5/5.</text>
</comment>
<comment type="subcellular location">
    <subcellularLocation>
        <location evidence="1">Cytoplasm</location>
    </subcellularLocation>
</comment>
<comment type="similarity">
    <text evidence="1">Belongs to the CoaE family.</text>
</comment>
<comment type="sequence caution" evidence="2">
    <conflict type="erroneous initiation">
        <sequence resource="EMBL-CDS" id="AAT86570"/>
    </conflict>
</comment>
<reference key="1">
    <citation type="journal article" date="2004" name="J. Infect. Dis.">
        <title>Progress toward characterization of the group A Streptococcus metagenome: complete genome sequence of a macrolide-resistant serotype M6 strain.</title>
        <authorList>
            <person name="Banks D.J."/>
            <person name="Porcella S.F."/>
            <person name="Barbian K.D."/>
            <person name="Beres S.B."/>
            <person name="Philips L.E."/>
            <person name="Voyich J.M."/>
            <person name="DeLeo F.R."/>
            <person name="Martin J.M."/>
            <person name="Somerville G.A."/>
            <person name="Musser J.M."/>
        </authorList>
    </citation>
    <scope>NUCLEOTIDE SEQUENCE [LARGE SCALE GENOMIC DNA]</scope>
    <source>
        <strain>ATCC BAA-946 / MGAS10394</strain>
    </source>
</reference>
<protein>
    <recommendedName>
        <fullName evidence="1">Dephospho-CoA kinase</fullName>
        <ecNumber evidence="1">2.7.1.24</ecNumber>
    </recommendedName>
    <alternativeName>
        <fullName evidence="1">Dephosphocoenzyme A kinase</fullName>
    </alternativeName>
</protein>
<name>COAE_STRP6</name>
<organism>
    <name type="scientific">Streptococcus pyogenes serotype M6 (strain ATCC BAA-946 / MGAS10394)</name>
    <dbReference type="NCBI Taxonomy" id="286636"/>
    <lineage>
        <taxon>Bacteria</taxon>
        <taxon>Bacillati</taxon>
        <taxon>Bacillota</taxon>
        <taxon>Bacilli</taxon>
        <taxon>Lactobacillales</taxon>
        <taxon>Streptococcaceae</taxon>
        <taxon>Streptococcus</taxon>
    </lineage>
</organism>